<accession>P80569</accession>
<accession>Q934J2</accession>
<gene>
    <name type="primary">pisA</name>
</gene>
<reference key="1">
    <citation type="submission" date="2000-06" db="EMBL/GenBank/DDBJ databases">
        <title>Characterization of the genes involved in the production of piscicolin 126, a bacteriocin from Carnobacterium piscicola JG126.</title>
        <authorList>
            <person name="Gibbs G.M."/>
            <person name="Fitzgerald A."/>
            <person name="Selleck M.L."/>
            <person name="Harmark K."/>
            <person name="Hillier A.J."/>
            <person name="Davidson B.E."/>
        </authorList>
    </citation>
    <scope>NUCLEOTIDE SEQUENCE [GENOMIC DNA]</scope>
    <source>
        <strain>JG126</strain>
    </source>
</reference>
<reference key="2">
    <citation type="journal article" date="1996" name="Appl. Environ. Microbiol.">
        <title>Characterization of the chemical and antimicrobial properties of piscicolin 126, a bacteriocin produced by Carnobacterium piscicola JG126.</title>
        <authorList>
            <person name="Jack R.W."/>
            <person name="Wan J."/>
            <person name="Gordon J."/>
            <person name="Harmark K."/>
            <person name="Davidson B.E."/>
            <person name="Hillier A.J."/>
            <person name="Wettenhall R.E.H."/>
            <person name="Hickey M.W."/>
            <person name="Coventry J.M."/>
        </authorList>
    </citation>
    <scope>PROTEIN SEQUENCE OF 19-62</scope>
    <scope>MASS SPECTROMETRY</scope>
    <source>
        <strain>JG126</strain>
    </source>
</reference>
<proteinExistence type="evidence at protein level"/>
<name>PIS1_CARML</name>
<organism>
    <name type="scientific">Carnobacterium maltaromaticum</name>
    <name type="common">Carnobacterium piscicola</name>
    <dbReference type="NCBI Taxonomy" id="2751"/>
    <lineage>
        <taxon>Bacteria</taxon>
        <taxon>Bacillati</taxon>
        <taxon>Bacillota</taxon>
        <taxon>Bacilli</taxon>
        <taxon>Lactobacillales</taxon>
        <taxon>Carnobacteriaceae</taxon>
        <taxon>Carnobacterium</taxon>
    </lineage>
</organism>
<dbReference type="EMBL" id="AF275938">
    <property type="protein sequence ID" value="AAK69419.1"/>
    <property type="molecule type" value="Genomic_DNA"/>
</dbReference>
<dbReference type="RefSeq" id="WP_057000613.1">
    <property type="nucleotide sequence ID" value="NZ_CAJGUS010000097.1"/>
</dbReference>
<dbReference type="SMR" id="P80569"/>
<dbReference type="TCDB" id="1.C.24.1.3">
    <property type="family name" value="the pediocin (pediocin) family"/>
</dbReference>
<dbReference type="GeneID" id="83606752"/>
<dbReference type="GO" id="GO:0005576">
    <property type="term" value="C:extracellular region"/>
    <property type="evidence" value="ECO:0007669"/>
    <property type="project" value="UniProtKB-SubCell"/>
</dbReference>
<dbReference type="GO" id="GO:0042742">
    <property type="term" value="P:defense response to bacterium"/>
    <property type="evidence" value="ECO:0007669"/>
    <property type="project" value="UniProtKB-KW"/>
</dbReference>
<dbReference type="GO" id="GO:0031640">
    <property type="term" value="P:killing of cells of another organism"/>
    <property type="evidence" value="ECO:0007669"/>
    <property type="project" value="UniProtKB-KW"/>
</dbReference>
<dbReference type="Gene3D" id="1.20.5.130">
    <property type="match status" value="1"/>
</dbReference>
<dbReference type="InterPro" id="IPR002633">
    <property type="entry name" value="Bacteriocin_IIa"/>
</dbReference>
<dbReference type="InterPro" id="IPR023384">
    <property type="entry name" value="Bacteriocin_IIa_CS"/>
</dbReference>
<dbReference type="InterPro" id="IPR023388">
    <property type="entry name" value="Bacteriocin_IIa_dom_sf"/>
</dbReference>
<dbReference type="Pfam" id="PF01721">
    <property type="entry name" value="Bacteriocin_II"/>
    <property type="match status" value="1"/>
</dbReference>
<dbReference type="PROSITE" id="PS60030">
    <property type="entry name" value="BACTERIOCIN_IIA"/>
    <property type="match status" value="1"/>
</dbReference>
<sequence length="62" mass="6380">MKTVKELSVKEMQLTTGGKYYGNGVSCNKNGCTVDWSKAIGIIGNNAAANLTTGGAAGWNKG</sequence>
<comment type="function">
    <text>Inhibits the growth of several Gram-positive bacteria, especially the food-borne pathogen L.monocytogenes, but has no effect on the growth of a number of yeasts and Gram-negative bacteria.</text>
</comment>
<comment type="subcellular location">
    <subcellularLocation>
        <location>Secreted</location>
    </subcellularLocation>
</comment>
<comment type="mass spectrometry" mass="4416.6" error="1.9" method="Electrospray" evidence="2"/>
<comment type="similarity">
    <text evidence="3">Belongs to the bacteriocin class IIA/YGNGV family.</text>
</comment>
<evidence type="ECO:0000250" key="1"/>
<evidence type="ECO:0000269" key="2">
    <source>
    </source>
</evidence>
<evidence type="ECO:0000305" key="3"/>
<keyword id="KW-0044">Antibiotic</keyword>
<keyword id="KW-0929">Antimicrobial</keyword>
<keyword id="KW-0078">Bacteriocin</keyword>
<keyword id="KW-0903">Direct protein sequencing</keyword>
<keyword id="KW-1015">Disulfide bond</keyword>
<keyword id="KW-0964">Secreted</keyword>
<protein>
    <recommendedName>
        <fullName>Bacteriocin piscicolin-126</fullName>
    </recommendedName>
</protein>
<feature type="propeptide" id="PRO_0000002738" evidence="2">
    <location>
        <begin position="1"/>
        <end position="18"/>
    </location>
</feature>
<feature type="chain" id="PRO_0000002739" description="Bacteriocin piscicolin-126">
    <location>
        <begin position="19"/>
        <end position="62"/>
    </location>
</feature>
<feature type="disulfide bond" evidence="1">
    <location>
        <begin position="27"/>
        <end position="32"/>
    </location>
</feature>